<keyword id="KW-0025">Alternative splicing</keyword>
<keyword id="KW-0067">ATP-binding</keyword>
<keyword id="KW-0217">Developmental protein</keyword>
<keyword id="KW-0221">Differentiation</keyword>
<keyword id="KW-0418">Kinase</keyword>
<keyword id="KW-0469">Meiosis</keyword>
<keyword id="KW-0479">Metal-binding</keyword>
<keyword id="KW-0547">Nucleotide-binding</keyword>
<keyword id="KW-0896">Oogenesis</keyword>
<keyword id="KW-1185">Reference proteome</keyword>
<keyword id="KW-0723">Serine/threonine-protein kinase</keyword>
<keyword id="KW-0808">Transferase</keyword>
<keyword id="KW-0862">Zinc</keyword>
<keyword id="KW-0863">Zinc-finger</keyword>
<protein>
    <recommendedName>
        <fullName>Raf homolog serine/threonine-protein kinase</fullName>
        <ecNumber>2.7.11.1</ecNumber>
    </recommendedName>
    <alternativeName>
        <fullName>Abnormal cell lineage protein 45</fullName>
    </alternativeName>
</protein>
<gene>
    <name type="primary">lin-45</name>
    <name type="synonym">raf-1</name>
    <name type="ORF">Y73B6A.5</name>
</gene>
<comment type="function">
    <text evidence="7 8 10 11 13">Protein kinase that participates in the induction of vulva and has roles in fertility and viability. Acts downstream of the Ras protein let-60 (PubMed:11861555, PubMed:14724126, PubMed:8483497). Required for progression of developing oocytes through the pachytene stage (PubMed:19826475). Plays a role in responses to M.nematophilum-mediated bacterial infection by promoting tail swelling and preventing constipation (PubMed:15268855). Positively regulates lifespan upstream of mek-2 and mpk-1 (PubMed:20624915).</text>
</comment>
<comment type="catalytic activity">
    <reaction>
        <text>L-seryl-[protein] + ATP = O-phospho-L-seryl-[protein] + ADP + H(+)</text>
        <dbReference type="Rhea" id="RHEA:17989"/>
        <dbReference type="Rhea" id="RHEA-COMP:9863"/>
        <dbReference type="Rhea" id="RHEA-COMP:11604"/>
        <dbReference type="ChEBI" id="CHEBI:15378"/>
        <dbReference type="ChEBI" id="CHEBI:29999"/>
        <dbReference type="ChEBI" id="CHEBI:30616"/>
        <dbReference type="ChEBI" id="CHEBI:83421"/>
        <dbReference type="ChEBI" id="CHEBI:456216"/>
        <dbReference type="EC" id="2.7.11.1"/>
    </reaction>
</comment>
<comment type="catalytic activity">
    <reaction>
        <text>L-threonyl-[protein] + ATP = O-phospho-L-threonyl-[protein] + ADP + H(+)</text>
        <dbReference type="Rhea" id="RHEA:46608"/>
        <dbReference type="Rhea" id="RHEA-COMP:11060"/>
        <dbReference type="Rhea" id="RHEA-COMP:11605"/>
        <dbReference type="ChEBI" id="CHEBI:15378"/>
        <dbReference type="ChEBI" id="CHEBI:30013"/>
        <dbReference type="ChEBI" id="CHEBI:30616"/>
        <dbReference type="ChEBI" id="CHEBI:61977"/>
        <dbReference type="ChEBI" id="CHEBI:456216"/>
        <dbReference type="EC" id="2.7.11.1"/>
    </reaction>
</comment>
<comment type="cofactor">
    <cofactor evidence="1">
        <name>Zn(2+)</name>
        <dbReference type="ChEBI" id="CHEBI:29105"/>
    </cofactor>
    <text evidence="1">Binds 2 Zn(2+) ions per subunit.</text>
</comment>
<comment type="subunit">
    <text evidence="9">Interacts with cdf-1 in a zinc-dependent manner which promotes its activity.</text>
</comment>
<comment type="alternative products">
    <event type="alternative splicing"/>
    <isoform>
        <id>Q07292-1</id>
        <name>a</name>
        <sequence type="displayed"/>
    </isoform>
    <isoform>
        <id>Q07292-2</id>
        <name>b</name>
        <sequence type="described" ref="VSP_020620 VSP_020622 VSP_020623"/>
    </isoform>
    <isoform>
        <id>Q07292-3</id>
        <name>c</name>
        <sequence type="described" ref="VSP_020621"/>
    </isoform>
</comment>
<comment type="disruption phenotype">
    <text evidence="11 12">RNAi-mediated knockdown causes a defect in pachytene progression resulting in a proximal gonad devoid of nuclei. The phenotype is more severe in gck-1 (km15) mutant (PubMed:19826475). RNAi-mediated knockdown in adults decreases lifespan (PubMed:20624915).</text>
</comment>
<comment type="miscellaneous">
    <text>Gld-1 binds to the 3'-UTR of lin-45 mRNA and is able to protect nonsense-containing lin-45 mRNA from nonsense mediated decay (NMD).</text>
</comment>
<comment type="similarity">
    <text evidence="15">Belongs to the protein kinase superfamily. TKL Ser/Thr protein kinase family. RAF subfamily.</text>
</comment>
<evidence type="ECO:0000250" key="1"/>
<evidence type="ECO:0000255" key="2">
    <source>
        <dbReference type="PROSITE-ProRule" id="PRU00159"/>
    </source>
</evidence>
<evidence type="ECO:0000255" key="3">
    <source>
        <dbReference type="PROSITE-ProRule" id="PRU00226"/>
    </source>
</evidence>
<evidence type="ECO:0000255" key="4">
    <source>
        <dbReference type="PROSITE-ProRule" id="PRU00262"/>
    </source>
</evidence>
<evidence type="ECO:0000255" key="5">
    <source>
        <dbReference type="PROSITE-ProRule" id="PRU10027"/>
    </source>
</evidence>
<evidence type="ECO:0000256" key="6">
    <source>
        <dbReference type="SAM" id="MobiDB-lite"/>
    </source>
</evidence>
<evidence type="ECO:0000269" key="7">
    <source>
    </source>
</evidence>
<evidence type="ECO:0000269" key="8">
    <source>
    </source>
</evidence>
<evidence type="ECO:0000269" key="9">
    <source>
    </source>
</evidence>
<evidence type="ECO:0000269" key="10">
    <source>
    </source>
</evidence>
<evidence type="ECO:0000269" key="11">
    <source>
    </source>
</evidence>
<evidence type="ECO:0000269" key="12">
    <source>
    </source>
</evidence>
<evidence type="ECO:0000269" key="13">
    <source>
    </source>
</evidence>
<evidence type="ECO:0000303" key="14">
    <source>
    </source>
</evidence>
<evidence type="ECO:0000305" key="15"/>
<reference key="1">
    <citation type="journal article" date="1993" name="Nature">
        <title>C. elegans lin-45 raf gene participates in let-60 ras-stimulated vulval differentiation.</title>
        <authorList>
            <person name="Han M."/>
            <person name="Golden A."/>
            <person name="Han Y."/>
            <person name="Sternberg P.W."/>
        </authorList>
    </citation>
    <scope>NUCLEOTIDE SEQUENCE [MRNA] (ISOFORM A)</scope>
    <scope>FUNCTION</scope>
    <source>
        <strain>Bristol N2</strain>
    </source>
</reference>
<reference key="2">
    <citation type="journal article" date="2004" name="Genes Dev.">
        <title>Translation repression by GLD-1 protects its mRNA targets from nonsense-mediated mRNA decay in C. elegans.</title>
        <authorList>
            <person name="Lee M.-H."/>
            <person name="Schedl T."/>
        </authorList>
    </citation>
    <scope>NUCLEOTIDE SEQUENCE [MRNA] (ISOFORMS A AND C)</scope>
</reference>
<reference key="3">
    <citation type="journal article" date="1998" name="Science">
        <title>Genome sequence of the nematode C. elegans: a platform for investigating biology.</title>
        <authorList>
            <consortium name="The C. elegans sequencing consortium"/>
        </authorList>
    </citation>
    <scope>NUCLEOTIDE SEQUENCE [LARGE SCALE GENOMIC DNA]</scope>
    <scope>ALTERNATIVE SPLICING</scope>
    <source>
        <strain>Bristol N2</strain>
    </source>
</reference>
<reference key="4">
    <citation type="journal article" date="2002" name="Genetics">
        <title>Caenorhabditis elegans lin-45 raf is essential for larval viability, fertility and the induction of vulval cell fates.</title>
        <authorList>
            <person name="Hsu V."/>
            <person name="Zobel C.L."/>
            <person name="Lambie E.J."/>
            <person name="Schedl T."/>
            <person name="Kornfeld K."/>
        </authorList>
    </citation>
    <scope>FUNCTION</scope>
    <scope>MUTAGENESIS OF PRO-92; ARG-108; ARG-118; SER-645; ILE-726 AND SER-754</scope>
</reference>
<reference key="5">
    <citation type="journal article" date="2004" name="Curr. Biol.">
        <title>The ERK MAP kinase cascade mediates tail swelling and a protective response to rectal infection in C. elegans.</title>
        <authorList>
            <person name="Nicholas H.R."/>
            <person name="Hodgkin J."/>
        </authorList>
    </citation>
    <scope>FUNCTION</scope>
</reference>
<reference key="6">
    <citation type="journal article" date="2004" name="Development">
        <title>C. elegans SUR-6/PR55 cooperates with LET-92/protein phosphatase 2A and promotes Raf activity independently of inhibitory Akt phosphorylation sites.</title>
        <authorList>
            <person name="Kao G."/>
            <person name="Tuck S."/>
            <person name="Baillie D."/>
            <person name="Sundaram M.V."/>
        </authorList>
    </citation>
    <scope>FUNCTION</scope>
    <scope>MUTAGENESIS OF SER-312 AND SER-453</scope>
</reference>
<reference key="7">
    <citation type="journal article" date="2004" name="J. Biol. Chem.">
        <title>Cation diffusion facilitator proteins modulate Raf-1 activity.</title>
        <authorList>
            <person name="Jirakulaporn T."/>
            <person name="Muslin A.J."/>
        </authorList>
    </citation>
    <scope>INTERACTION WITH CDF-1</scope>
</reference>
<reference key="8">
    <citation type="journal article" date="2009" name="PLoS ONE">
        <title>The germinal center kinase GCK-1 is a negative regulator of MAP kinase activation and apoptosis in the C. elegans germline.</title>
        <authorList>
            <person name="Schouest K.R."/>
            <person name="Kurasawa Y."/>
            <person name="Furuta T."/>
            <person name="Hisamoto N."/>
            <person name="Matsumoto K."/>
            <person name="Schumacher J.M."/>
        </authorList>
    </citation>
    <scope>FUNCTION</scope>
    <scope>DISRUPTION PHENOTYPE</scope>
</reference>
<reference key="9">
    <citation type="journal article" date="2010" name="J. Biol. Chem.">
        <title>The ERK-MAPK pathway regulates longevity through SKN-1 and insulin-like signaling in Caenorhabditis elegans.</title>
        <authorList>
            <person name="Okuyama T."/>
            <person name="Inoue H."/>
            <person name="Ookuma S."/>
            <person name="Satoh T."/>
            <person name="Kano K."/>
            <person name="Honjoh S."/>
            <person name="Hisamoto N."/>
            <person name="Matsumoto K."/>
            <person name="Nishida E."/>
        </authorList>
    </citation>
    <scope>FUNCTION</scope>
    <scope>DISRUPTION PHENOTYPE</scope>
</reference>
<sequence>MSRINFKKSSASTTPTSPHCPSPRLISLPRCASSSIDRKDQASPMASPSTPLYPKHSDSLHSLSGHHSAGGAGTSDKEPPKFKYKMIMVHLPFDQHSRVEVRPGETARDAISKLLKKRNITPQLCHVNASSDPKQESIELSLTMEEIASRLPGNELWVHSEYLNTVSSIKHAIVRRTFIPPKSCDVCNNPIWMMGFRCEFCQFKFHQRCSSFAPLYCDLLQSVPKNEDLVKELFGIASQVEGPDRSVAEIVLANLAPTSGQSPAATPDSSHPDLTSIKRTGGVKRHPMAVSPQNETSQLSPSGPYPRDRSSSAPNINAINDEATVQHNQRILDALEAQRLEEESRDKTGSLLSTQARHRPHFQSGHILSGARMNRLHPLVDCTPLGSNSPSSTCSSPPGGLIGQPTLGQSPNVSGSTTSSLVAAHLHTLPLTPPQSAPPQKISPGFFRNRSRSPGERLDAQRPRPPQKPHHEDWEILPNEFIIQYKVGSGSFGTVYRGEFFGTVAIKKLNVVDPTPSQMAAFKNEVAVLKKTRHLNVLLFMGWVREPEIAIITQWCEGSSLYRHIHVQEPRVEFEMGAIIDILKQVSLGMNYLHSKNIIHRDLKTNNIFLMDDMSTVKIGDFGLATVKTKWTVNGGQQQQQPTGSILWMAPEVIRMQDDNPYTPQSDVYSFGICMYEILSSHLPYSNINNRDQILFMVGRGYLRPDRSKIRHDTPKSMLKLYDNCIMFDRNERPVFGEVLERLRDIILPKLTRSQSAPNVLHLDSQYSVMDAVMRSQMLSWSYIPPATAKTPQSAAAAAAANKKAYYNVYGLI</sequence>
<proteinExistence type="evidence at protein level"/>
<feature type="chain" id="PRO_0000086193" description="Raf homolog serine/threonine-protein kinase">
    <location>
        <begin position="1"/>
        <end position="813"/>
    </location>
</feature>
<feature type="domain" description="RBD" evidence="4">
    <location>
        <begin position="85"/>
        <end position="161"/>
    </location>
</feature>
<feature type="domain" description="Protein kinase" evidence="2">
    <location>
        <begin position="481"/>
        <end position="748"/>
    </location>
</feature>
<feature type="zinc finger region" description="Phorbol-ester/DAG-type" evidence="3">
    <location>
        <begin position="170"/>
        <end position="217"/>
    </location>
</feature>
<feature type="region of interest" description="Disordered" evidence="6">
    <location>
        <begin position="1"/>
        <end position="79"/>
    </location>
</feature>
<feature type="region of interest" description="Disordered" evidence="6">
    <location>
        <begin position="258"/>
        <end position="315"/>
    </location>
</feature>
<feature type="region of interest" description="Disordered" evidence="6">
    <location>
        <begin position="338"/>
        <end position="358"/>
    </location>
</feature>
<feature type="region of interest" description="Disordered" evidence="6">
    <location>
        <begin position="383"/>
        <end position="472"/>
    </location>
</feature>
<feature type="compositionally biased region" description="Low complexity" evidence="6">
    <location>
        <begin position="9"/>
        <end position="23"/>
    </location>
</feature>
<feature type="compositionally biased region" description="Polar residues" evidence="6">
    <location>
        <begin position="258"/>
        <end position="273"/>
    </location>
</feature>
<feature type="compositionally biased region" description="Polar residues" evidence="6">
    <location>
        <begin position="291"/>
        <end position="301"/>
    </location>
</feature>
<feature type="compositionally biased region" description="Basic and acidic residues" evidence="6">
    <location>
        <begin position="338"/>
        <end position="348"/>
    </location>
</feature>
<feature type="compositionally biased region" description="Low complexity" evidence="6">
    <location>
        <begin position="386"/>
        <end position="399"/>
    </location>
</feature>
<feature type="compositionally biased region" description="Polar residues" evidence="6">
    <location>
        <begin position="406"/>
        <end position="421"/>
    </location>
</feature>
<feature type="compositionally biased region" description="Basic and acidic residues" evidence="6">
    <location>
        <begin position="453"/>
        <end position="462"/>
    </location>
</feature>
<feature type="active site" description="Proton acceptor" evidence="2 5">
    <location>
        <position position="602"/>
    </location>
</feature>
<feature type="binding site" evidence="1">
    <location>
        <position position="184"/>
    </location>
    <ligand>
        <name>Zn(2+)</name>
        <dbReference type="ChEBI" id="CHEBI:29105"/>
        <label>2</label>
    </ligand>
</feature>
<feature type="binding site" evidence="1">
    <location>
        <position position="187"/>
    </location>
    <ligand>
        <name>Zn(2+)</name>
        <dbReference type="ChEBI" id="CHEBI:29105"/>
        <label>2</label>
    </ligand>
</feature>
<feature type="binding site" evidence="1">
    <location>
        <position position="198"/>
    </location>
    <ligand>
        <name>Zn(2+)</name>
        <dbReference type="ChEBI" id="CHEBI:29105"/>
        <label>1</label>
    </ligand>
</feature>
<feature type="binding site" evidence="1">
    <location>
        <position position="201"/>
    </location>
    <ligand>
        <name>Zn(2+)</name>
        <dbReference type="ChEBI" id="CHEBI:29105"/>
        <label>1</label>
    </ligand>
</feature>
<feature type="binding site" evidence="1">
    <location>
        <position position="206"/>
    </location>
    <ligand>
        <name>Zn(2+)</name>
        <dbReference type="ChEBI" id="CHEBI:29105"/>
        <label>2</label>
    </ligand>
</feature>
<feature type="binding site" evidence="1">
    <location>
        <position position="209"/>
    </location>
    <ligand>
        <name>Zn(2+)</name>
        <dbReference type="ChEBI" id="CHEBI:29105"/>
        <label>2</label>
    </ligand>
</feature>
<feature type="binding site" evidence="1">
    <location>
        <position position="217"/>
    </location>
    <ligand>
        <name>Zn(2+)</name>
        <dbReference type="ChEBI" id="CHEBI:29105"/>
        <label>1</label>
    </ligand>
</feature>
<feature type="binding site" evidence="2">
    <location>
        <begin position="487"/>
        <end position="495"/>
    </location>
    <ligand>
        <name>ATP</name>
        <dbReference type="ChEBI" id="CHEBI:30616"/>
    </ligand>
</feature>
<feature type="binding site" evidence="2">
    <location>
        <position position="507"/>
    </location>
    <ligand>
        <name>ATP</name>
        <dbReference type="ChEBI" id="CHEBI:30616"/>
    </ligand>
</feature>
<feature type="splice variant" id="VSP_020621" description="In isoform c." evidence="14">
    <location>
        <begin position="1"/>
        <end position="44"/>
    </location>
</feature>
<feature type="splice variant" id="VSP_020620" description="In isoform b." evidence="15">
    <original>M</original>
    <variation>MSAMAVLYSVCHFHGGWNRRKSAPKSPVTSSQTPSSSSTRRRM</variation>
    <location>
        <position position="1"/>
    </location>
</feature>
<feature type="splice variant" id="VSP_020622" description="In isoform b." evidence="15">
    <original>EPRV</original>
    <variation>GDLN</variation>
    <location>
        <begin position="569"/>
        <end position="572"/>
    </location>
</feature>
<feature type="splice variant" id="VSP_020623" description="In isoform b." evidence="15">
    <location>
        <begin position="573"/>
        <end position="813"/>
    </location>
</feature>
<feature type="mutagenesis site" description="In n2018; 76% larval lethal, 24% abnormal vulval development." evidence="7">
    <original>P</original>
    <variation>S</variation>
    <location>
        <position position="92"/>
    </location>
</feature>
<feature type="mutagenesis site" description="In n1925; no effect." evidence="7">
    <original>R</original>
    <variation>W</variation>
    <location>
        <position position="108"/>
    </location>
</feature>
<feature type="mutagenesis site" description="In n2506; 86% larval lethal, 93% abnormal vulval development." evidence="7">
    <original>R</original>
    <variation>W</variation>
    <location>
        <position position="118"/>
    </location>
</feature>
<feature type="mutagenesis site" description="Probably abolishes phosphorylation. Multivulva formation. Multivulva formation; when associated with A-453." evidence="8">
    <original>S</original>
    <variation>A</variation>
    <location>
        <position position="312"/>
    </location>
</feature>
<feature type="mutagenesis site" description="Probably abolishes phosphorylation. Multivulva formation; when associated with A-312." evidence="8">
    <original>S</original>
    <variation>A</variation>
    <location>
        <position position="453"/>
    </location>
</feature>
<feature type="mutagenesis site" description="In oz178 and oz201; 55% larval lethal, 100% abnormal vulval development." evidence="7">
    <original>S</original>
    <variation>N</variation>
    <location>
        <position position="645"/>
    </location>
</feature>
<feature type="mutagenesis site" description="In n1924; 5% larval lethal, no effect on vulval development." evidence="7">
    <original>I</original>
    <variation>F</variation>
    <location>
        <position position="726"/>
    </location>
</feature>
<feature type="mutagenesis site" description="In n2520 and n2523; no effect." evidence="7">
    <original>S</original>
    <variation>F</variation>
    <location>
        <position position="754"/>
    </location>
</feature>
<feature type="sequence conflict" description="In Ref. 1; AAA28142." evidence="15" ref="1">
    <original>A</original>
    <variation>R</variation>
    <location>
        <position position="801"/>
    </location>
</feature>
<organism>
    <name type="scientific">Caenorhabditis elegans</name>
    <dbReference type="NCBI Taxonomy" id="6239"/>
    <lineage>
        <taxon>Eukaryota</taxon>
        <taxon>Metazoa</taxon>
        <taxon>Ecdysozoa</taxon>
        <taxon>Nematoda</taxon>
        <taxon>Chromadorea</taxon>
        <taxon>Rhabditida</taxon>
        <taxon>Rhabditina</taxon>
        <taxon>Rhabditomorpha</taxon>
        <taxon>Rhabditoidea</taxon>
        <taxon>Rhabditidae</taxon>
        <taxon>Peloderinae</taxon>
        <taxon>Caenorhabditis</taxon>
    </lineage>
</organism>
<name>KRAF1_CAEEL</name>
<accession>Q07292</accession>
<accession>Q6RT23</accession>
<accession>Q8MXT8</accession>
<accession>Q9N4E3</accession>
<dbReference type="EC" id="2.7.11.1"/>
<dbReference type="EMBL" id="L15347">
    <property type="protein sequence ID" value="AAA28142.1"/>
    <property type="molecule type" value="mRNA"/>
</dbReference>
<dbReference type="EMBL" id="AY455928">
    <property type="protein sequence ID" value="AAR26307.1"/>
    <property type="molecule type" value="mRNA"/>
</dbReference>
<dbReference type="EMBL" id="AY493413">
    <property type="protein sequence ID" value="AAR86712.1"/>
    <property type="molecule type" value="mRNA"/>
</dbReference>
<dbReference type="EMBL" id="AY493414">
    <property type="protein sequence ID" value="AAR86713.1"/>
    <property type="molecule type" value="mRNA"/>
</dbReference>
<dbReference type="EMBL" id="FO080249">
    <property type="protein sequence ID" value="CCD62343.1"/>
    <property type="molecule type" value="Genomic_DNA"/>
</dbReference>
<dbReference type="EMBL" id="FO080249">
    <property type="protein sequence ID" value="CCD62344.1"/>
    <property type="molecule type" value="Genomic_DNA"/>
</dbReference>
<dbReference type="PIR" id="S33261">
    <property type="entry name" value="S33261"/>
</dbReference>
<dbReference type="RefSeq" id="NP_001293844.1">
    <property type="nucleotide sequence ID" value="NM_001306915.1"/>
</dbReference>
<dbReference type="RefSeq" id="NP_001368430.1">
    <molecule id="Q07292-3"/>
    <property type="nucleotide sequence ID" value="NM_001380288.1"/>
</dbReference>
<dbReference type="RefSeq" id="NP_741430.3">
    <molecule id="Q07292-1"/>
    <property type="nucleotide sequence ID" value="NM_171367.5"/>
</dbReference>
<dbReference type="RefSeq" id="NP_741431.2">
    <property type="nucleotide sequence ID" value="NM_171368.2"/>
</dbReference>
<dbReference type="SMR" id="Q07292"/>
<dbReference type="BioGRID" id="42556">
    <property type="interactions" value="21"/>
</dbReference>
<dbReference type="FunCoup" id="Q07292">
    <property type="interactions" value="3125"/>
</dbReference>
<dbReference type="IntAct" id="Q07292">
    <property type="interactions" value="4"/>
</dbReference>
<dbReference type="STRING" id="6239.Y73B6A.5b.1"/>
<dbReference type="iPTMnet" id="Q07292"/>
<dbReference type="PaxDb" id="6239-Y73B6A.5a.1"/>
<dbReference type="PeptideAtlas" id="Q07292"/>
<dbReference type="EnsemblMetazoa" id="Y73B6A.5a.1">
    <molecule id="Q07292-1"/>
    <property type="protein sequence ID" value="Y73B6A.5a.1"/>
    <property type="gene ID" value="WBGene00003030"/>
</dbReference>
<dbReference type="EnsemblMetazoa" id="Y73B6A.5b.1">
    <property type="protein sequence ID" value="Y73B6A.5b.1"/>
    <property type="gene ID" value="WBGene00003030"/>
</dbReference>
<dbReference type="GeneID" id="177436"/>
<dbReference type="KEGG" id="cel:CELE_Y73B6A.5"/>
<dbReference type="UCSC" id="Y73B6A.5a.1">
    <molecule id="Q07292-1"/>
    <property type="organism name" value="c. elegans"/>
</dbReference>
<dbReference type="AGR" id="WB:WBGene00003030"/>
<dbReference type="CTD" id="177436"/>
<dbReference type="WormBase" id="Y73B6A.5a">
    <molecule id="Q07292-1"/>
    <property type="protein sequence ID" value="CE25585"/>
    <property type="gene ID" value="WBGene00003030"/>
    <property type="gene designation" value="lin-45"/>
</dbReference>
<dbReference type="WormBase" id="Y73B6A.5b">
    <property type="protein sequence ID" value="CE49395"/>
    <property type="gene ID" value="WBGene00003030"/>
    <property type="gene designation" value="lin-45"/>
</dbReference>
<dbReference type="eggNOG" id="KOG0193">
    <property type="taxonomic scope" value="Eukaryota"/>
</dbReference>
<dbReference type="InParanoid" id="Q07292"/>
<dbReference type="OrthoDB" id="774951at2759"/>
<dbReference type="PhylomeDB" id="Q07292"/>
<dbReference type="Reactome" id="R-CEL-170968">
    <property type="pathway name" value="Frs2-mediated activation"/>
</dbReference>
<dbReference type="Reactome" id="R-CEL-2672351">
    <property type="pathway name" value="Stimuli-sensing channels"/>
</dbReference>
<dbReference type="Reactome" id="R-CEL-392517">
    <property type="pathway name" value="Rap1 signalling"/>
</dbReference>
<dbReference type="Reactome" id="R-CEL-430116">
    <property type="pathway name" value="GP1b-IX-V activation signalling"/>
</dbReference>
<dbReference type="Reactome" id="R-CEL-5621575">
    <property type="pathway name" value="CD209 (DC-SIGN) signaling"/>
</dbReference>
<dbReference type="Reactome" id="R-CEL-5673000">
    <property type="pathway name" value="RAF activation"/>
</dbReference>
<dbReference type="Reactome" id="R-CEL-5674135">
    <property type="pathway name" value="MAP2K and MAPK activation"/>
</dbReference>
<dbReference type="Reactome" id="R-CEL-5674499">
    <property type="pathway name" value="Negative feedback regulation of MAPK pathway"/>
</dbReference>
<dbReference type="Reactome" id="R-CEL-5675221">
    <property type="pathway name" value="Negative regulation of MAPK pathway"/>
</dbReference>
<dbReference type="SignaLink" id="Q07292"/>
<dbReference type="PRO" id="PR:Q07292"/>
<dbReference type="Proteomes" id="UP000001940">
    <property type="component" value="Chromosome IV"/>
</dbReference>
<dbReference type="Bgee" id="WBGene00003030">
    <property type="expression patterns" value="Expressed in material anatomical entity and 5 other cell types or tissues"/>
</dbReference>
<dbReference type="ExpressionAtlas" id="Q07292">
    <property type="expression patterns" value="baseline and differential"/>
</dbReference>
<dbReference type="GO" id="GO:0005737">
    <property type="term" value="C:cytoplasm"/>
    <property type="evidence" value="ECO:0000318"/>
    <property type="project" value="GO_Central"/>
</dbReference>
<dbReference type="GO" id="GO:0005524">
    <property type="term" value="F:ATP binding"/>
    <property type="evidence" value="ECO:0007669"/>
    <property type="project" value="UniProtKB-KW"/>
</dbReference>
<dbReference type="GO" id="GO:0004709">
    <property type="term" value="F:MAP kinase kinase kinase activity"/>
    <property type="evidence" value="ECO:0000318"/>
    <property type="project" value="GO_Central"/>
</dbReference>
<dbReference type="GO" id="GO:0106310">
    <property type="term" value="F:protein serine kinase activity"/>
    <property type="evidence" value="ECO:0007669"/>
    <property type="project" value="RHEA"/>
</dbReference>
<dbReference type="GO" id="GO:0031267">
    <property type="term" value="F:small GTPase binding"/>
    <property type="evidence" value="ECO:0000353"/>
    <property type="project" value="WormBase"/>
</dbReference>
<dbReference type="GO" id="GO:0008270">
    <property type="term" value="F:zinc ion binding"/>
    <property type="evidence" value="ECO:0007669"/>
    <property type="project" value="UniProtKB-KW"/>
</dbReference>
<dbReference type="GO" id="GO:0001708">
    <property type="term" value="P:cell fate specification"/>
    <property type="evidence" value="ECO:0000315"/>
    <property type="project" value="WormBase"/>
</dbReference>
<dbReference type="GO" id="GO:0050830">
    <property type="term" value="P:defense response to Gram-positive bacterium"/>
    <property type="evidence" value="ECO:0000315"/>
    <property type="project" value="UniProtKB"/>
</dbReference>
<dbReference type="GO" id="GO:0000165">
    <property type="term" value="P:MAPK cascade"/>
    <property type="evidence" value="ECO:0000315"/>
    <property type="project" value="UniProtKB"/>
</dbReference>
<dbReference type="GO" id="GO:0051321">
    <property type="term" value="P:meiotic cell cycle"/>
    <property type="evidence" value="ECO:0007669"/>
    <property type="project" value="UniProtKB-KW"/>
</dbReference>
<dbReference type="GO" id="GO:0002119">
    <property type="term" value="P:nematode larval development"/>
    <property type="evidence" value="ECO:0000315"/>
    <property type="project" value="WormBase"/>
</dbReference>
<dbReference type="GO" id="GO:0048477">
    <property type="term" value="P:oogenesis"/>
    <property type="evidence" value="ECO:0007669"/>
    <property type="project" value="UniProtKB-KW"/>
</dbReference>
<dbReference type="GO" id="GO:0007265">
    <property type="term" value="P:Ras protein signal transduction"/>
    <property type="evidence" value="ECO:0000316"/>
    <property type="project" value="WormBase"/>
</dbReference>
<dbReference type="GO" id="GO:0022414">
    <property type="term" value="P:reproductive process"/>
    <property type="evidence" value="ECO:0000315"/>
    <property type="project" value="WormBase"/>
</dbReference>
<dbReference type="GO" id="GO:0040025">
    <property type="term" value="P:vulval development"/>
    <property type="evidence" value="ECO:0000315"/>
    <property type="project" value="UniProtKB"/>
</dbReference>
<dbReference type="CDD" id="cd20811">
    <property type="entry name" value="C1_Raf"/>
    <property type="match status" value="1"/>
</dbReference>
<dbReference type="CDD" id="cd14062">
    <property type="entry name" value="STKc_Raf"/>
    <property type="match status" value="1"/>
</dbReference>
<dbReference type="FunFam" id="3.30.200.20:FF:000024">
    <property type="entry name" value="B-Raf proto-oncogene serine/threonine-protein kinase"/>
    <property type="match status" value="1"/>
</dbReference>
<dbReference type="FunFam" id="3.10.20.90:FF:000366">
    <property type="entry name" value="Raf homolog serine/threonine-protein kinase"/>
    <property type="match status" value="1"/>
</dbReference>
<dbReference type="Gene3D" id="3.30.60.20">
    <property type="match status" value="1"/>
</dbReference>
<dbReference type="Gene3D" id="3.10.20.90">
    <property type="entry name" value="Phosphatidylinositol 3-kinase Catalytic Subunit, Chain A, domain 1"/>
    <property type="match status" value="1"/>
</dbReference>
<dbReference type="Gene3D" id="3.30.200.20">
    <property type="entry name" value="Phosphorylase Kinase, domain 1"/>
    <property type="match status" value="1"/>
</dbReference>
<dbReference type="Gene3D" id="1.10.510.10">
    <property type="entry name" value="Transferase(Phosphotransferase) domain 1"/>
    <property type="match status" value="1"/>
</dbReference>
<dbReference type="InterPro" id="IPR046349">
    <property type="entry name" value="C1-like_sf"/>
</dbReference>
<dbReference type="InterPro" id="IPR011009">
    <property type="entry name" value="Kinase-like_dom_sf"/>
</dbReference>
<dbReference type="InterPro" id="IPR002219">
    <property type="entry name" value="PE/DAG-bd"/>
</dbReference>
<dbReference type="InterPro" id="IPR000719">
    <property type="entry name" value="Prot_kinase_dom"/>
</dbReference>
<dbReference type="InterPro" id="IPR017441">
    <property type="entry name" value="Protein_kinase_ATP_BS"/>
</dbReference>
<dbReference type="InterPro" id="IPR003116">
    <property type="entry name" value="RBD_dom"/>
</dbReference>
<dbReference type="InterPro" id="IPR001245">
    <property type="entry name" value="Ser-Thr/Tyr_kinase_cat_dom"/>
</dbReference>
<dbReference type="InterPro" id="IPR008271">
    <property type="entry name" value="Ser/Thr_kinase_AS"/>
</dbReference>
<dbReference type="InterPro" id="IPR051681">
    <property type="entry name" value="Ser/Thr_Kinases-Pseudokinases"/>
</dbReference>
<dbReference type="InterPro" id="IPR029071">
    <property type="entry name" value="Ubiquitin-like_domsf"/>
</dbReference>
<dbReference type="PANTHER" id="PTHR44329:SF262">
    <property type="entry name" value="RAF HOMOLOG SERINE_THREONINE-PROTEIN KINASE RAF"/>
    <property type="match status" value="1"/>
</dbReference>
<dbReference type="PANTHER" id="PTHR44329">
    <property type="entry name" value="SERINE/THREONINE-PROTEIN KINASE TNNI3K-RELATED"/>
    <property type="match status" value="1"/>
</dbReference>
<dbReference type="Pfam" id="PF00130">
    <property type="entry name" value="C1_1"/>
    <property type="match status" value="1"/>
</dbReference>
<dbReference type="Pfam" id="PF07714">
    <property type="entry name" value="PK_Tyr_Ser-Thr"/>
    <property type="match status" value="1"/>
</dbReference>
<dbReference type="Pfam" id="PF02196">
    <property type="entry name" value="RBD"/>
    <property type="match status" value="1"/>
</dbReference>
<dbReference type="SMART" id="SM00109">
    <property type="entry name" value="C1"/>
    <property type="match status" value="1"/>
</dbReference>
<dbReference type="SMART" id="SM00455">
    <property type="entry name" value="RBD"/>
    <property type="match status" value="1"/>
</dbReference>
<dbReference type="SMART" id="SM00220">
    <property type="entry name" value="S_TKc"/>
    <property type="match status" value="1"/>
</dbReference>
<dbReference type="SUPFAM" id="SSF57889">
    <property type="entry name" value="Cysteine-rich domain"/>
    <property type="match status" value="1"/>
</dbReference>
<dbReference type="SUPFAM" id="SSF56112">
    <property type="entry name" value="Protein kinase-like (PK-like)"/>
    <property type="match status" value="1"/>
</dbReference>
<dbReference type="SUPFAM" id="SSF54236">
    <property type="entry name" value="Ubiquitin-like"/>
    <property type="match status" value="1"/>
</dbReference>
<dbReference type="PROSITE" id="PS00107">
    <property type="entry name" value="PROTEIN_KINASE_ATP"/>
    <property type="match status" value="1"/>
</dbReference>
<dbReference type="PROSITE" id="PS50011">
    <property type="entry name" value="PROTEIN_KINASE_DOM"/>
    <property type="match status" value="1"/>
</dbReference>
<dbReference type="PROSITE" id="PS00108">
    <property type="entry name" value="PROTEIN_KINASE_ST"/>
    <property type="match status" value="1"/>
</dbReference>
<dbReference type="PROSITE" id="PS50898">
    <property type="entry name" value="RBD"/>
    <property type="match status" value="1"/>
</dbReference>
<dbReference type="PROSITE" id="PS00479">
    <property type="entry name" value="ZF_DAG_PE_1"/>
    <property type="match status" value="1"/>
</dbReference>
<dbReference type="PROSITE" id="PS50081">
    <property type="entry name" value="ZF_DAG_PE_2"/>
    <property type="match status" value="1"/>
</dbReference>